<gene>
    <name type="primary">L</name>
</gene>
<protein>
    <recommendedName>
        <fullName>RNA-directed RNA polymerase L</fullName>
        <shortName>Protein L</shortName>
    </recommendedName>
    <alternativeName>
        <fullName>Large structural protein</fullName>
    </alternativeName>
    <alternativeName>
        <fullName>Replicase</fullName>
    </alternativeName>
    <alternativeName>
        <fullName>Transcriptase</fullName>
    </alternativeName>
    <domain>
        <recommendedName>
            <fullName>RNA-directed RNA polymerase</fullName>
            <ecNumber evidence="2">2.7.7.48</ecNumber>
        </recommendedName>
    </domain>
    <domain>
        <recommendedName>
            <fullName evidence="2">GTP phosphohydrolase</fullName>
            <ecNumber evidence="2">3.6.1.-</ecNumber>
        </recommendedName>
    </domain>
    <domain>
        <recommendedName>
            <fullName evidence="6">GDP polyribonucleotidyltransferase</fullName>
            <ecNumber evidence="2">2.7.7.88</ecNumber>
        </recommendedName>
        <alternativeName>
            <fullName evidence="6">PRNTase</fullName>
        </alternativeName>
    </domain>
    <domain>
        <recommendedName>
            <fullName evidence="6">mRNA cap methyltransferase</fullName>
            <ecNumber evidence="1">2.1.1.375</ecNumber>
        </recommendedName>
        <alternativeName>
            <fullName evidence="1">mRNA (guanine-N(7)-)-methyltransferase</fullName>
            <shortName evidence="1">G-N7-MTase</shortName>
        </alternativeName>
        <alternativeName>
            <fullName evidence="1">mRNA (nucleoside-2'-O-)-methyltransferase</fullName>
            <shortName evidence="1">N1-2'-O-MTase</shortName>
        </alternativeName>
    </domain>
</protein>
<organism>
    <name type="scientific">Human respiratory syncytial virus B (strain B1)</name>
    <dbReference type="NCBI Taxonomy" id="79692"/>
    <lineage>
        <taxon>Viruses</taxon>
        <taxon>Riboviria</taxon>
        <taxon>Orthornavirae</taxon>
        <taxon>Negarnaviricota</taxon>
        <taxon>Haploviricotina</taxon>
        <taxon>Monjiviricetes</taxon>
        <taxon>Mononegavirales</taxon>
        <taxon>Pneumoviridae</taxon>
        <taxon>Orthopneumovirus</taxon>
        <taxon>Orthopneumovirus hominis</taxon>
    </lineage>
</organism>
<comment type="function">
    <text evidence="1 2">Responsible for RNA synthesis (replicase and transcriptase), cap addition, and cap methylation. Also performs the polyadenylation of subgenomic mRNAs by a stuttering mechanism at a slipery stop site present at the end of viral genes. The template is composed of the viral RNA tightly encapsidated by the nucleoprotein (N). The viral polymerase binds to the genomic RNA at two different sites in the 3' leader promoter thereby initiating either genome replication or mRNA transcription. In the transcription mode, the polymerase performs the sequential transcription of all mRNAs using a termination-reinitiation mechanism responding to gene start and gene end signals. Some polymerase disengage from the template at each gene junction, resulting in a decreasing abundance of transcripts from the 3' to the 5' end of the genome. The first gene is the most transcribed, and the last the least transcribed. Needs as cofactors the phosphoprotein for processivity and the M2-1 anti-termination protein. Polyribonucleotidyl transferase (PRNTase) adds the cap structure when the nascent RNA chain length has reached few nucleotides (By similarity). Ribose 2'-O methylation of viral mRNA cap precedes and facilitates subsequent guanine-N-7 methylation (By similarity). In the replication mode, the polymerase replicates the whole viral genome without recognizing the gene end transcriptional signals. The ability of the polymerase to override the gene end signals as it is producing the antigenome is probably due to replicative RNA becoming encapsidated with nucleoprotein as it is synthesized (By similarity).</text>
</comment>
<comment type="catalytic activity">
    <reaction evidence="4">
        <text>RNA(n) + a ribonucleoside 5'-triphosphate = RNA(n+1) + diphosphate</text>
        <dbReference type="Rhea" id="RHEA:21248"/>
        <dbReference type="Rhea" id="RHEA-COMP:14527"/>
        <dbReference type="Rhea" id="RHEA-COMP:17342"/>
        <dbReference type="ChEBI" id="CHEBI:33019"/>
        <dbReference type="ChEBI" id="CHEBI:61557"/>
        <dbReference type="ChEBI" id="CHEBI:140395"/>
        <dbReference type="EC" id="2.7.7.48"/>
    </reaction>
</comment>
<comment type="catalytic activity">
    <reaction evidence="2">
        <text>GTP + H2O = GDP + phosphate + H(+)</text>
        <dbReference type="Rhea" id="RHEA:19669"/>
        <dbReference type="ChEBI" id="CHEBI:15377"/>
        <dbReference type="ChEBI" id="CHEBI:15378"/>
        <dbReference type="ChEBI" id="CHEBI:37565"/>
        <dbReference type="ChEBI" id="CHEBI:43474"/>
        <dbReference type="ChEBI" id="CHEBI:58189"/>
    </reaction>
</comment>
<comment type="catalytic activity">
    <reaction evidence="2">
        <text>a 5'-end triphospho-adenylyl-adenylyl-cytidylyl-adenosine in mRNA + GDP + H(+) = a 5'-end (5'-triphosphoguanosine)-adenylyl-adenylyl-cytidylyl-adenosine in mRNA + diphosphate</text>
        <dbReference type="Rhea" id="RHEA:65436"/>
        <dbReference type="Rhea" id="RHEA-COMP:16797"/>
        <dbReference type="Rhea" id="RHEA-COMP:16799"/>
        <dbReference type="ChEBI" id="CHEBI:15378"/>
        <dbReference type="ChEBI" id="CHEBI:33019"/>
        <dbReference type="ChEBI" id="CHEBI:58189"/>
        <dbReference type="ChEBI" id="CHEBI:156484"/>
        <dbReference type="ChEBI" id="CHEBI:156503"/>
        <dbReference type="EC" id="2.7.7.88"/>
    </reaction>
</comment>
<comment type="catalytic activity">
    <reaction evidence="1">
        <text>a 5'-end (5'-triphosphoguanosine)-adenylyl-adenylyl-cytidylyl-adenosine in mRNA + 2 S-adenosyl-L-methionine = a 5'-end (N(7)-methyl 5'-triphosphoguanosine)-(2'-O-methyladenylyl)-adenylyl-cytidylyl-adenosine in mRNA + 2 S-adenosyl-L-homocysteine + H(+)</text>
        <dbReference type="Rhea" id="RHEA:65376"/>
        <dbReference type="Rhea" id="RHEA-COMP:16797"/>
        <dbReference type="Rhea" id="RHEA-COMP:16798"/>
        <dbReference type="ChEBI" id="CHEBI:15378"/>
        <dbReference type="ChEBI" id="CHEBI:57856"/>
        <dbReference type="ChEBI" id="CHEBI:59789"/>
        <dbReference type="ChEBI" id="CHEBI:156483"/>
        <dbReference type="ChEBI" id="CHEBI:156484"/>
        <dbReference type="EC" id="2.1.1.375"/>
    </reaction>
</comment>
<comment type="catalytic activity">
    <reaction evidence="1">
        <text>a 5'-end (5'-triphosphoguanosine)-adenylyl-adenylyl-cytidylyl-adenosine in mRNA + S-adenosyl-L-methionine = a 5'-end (5'-triphosphoguanosine)-(2'-O-methyladenylyl)-adenylyl-cytidylyl-adenosine in mRNA + S-adenosyl-L-homocysteine + H(+)</text>
        <dbReference type="Rhea" id="RHEA:65380"/>
        <dbReference type="Rhea" id="RHEA-COMP:16797"/>
        <dbReference type="Rhea" id="RHEA-COMP:16801"/>
        <dbReference type="ChEBI" id="CHEBI:15378"/>
        <dbReference type="ChEBI" id="CHEBI:57856"/>
        <dbReference type="ChEBI" id="CHEBI:59789"/>
        <dbReference type="ChEBI" id="CHEBI:156482"/>
        <dbReference type="ChEBI" id="CHEBI:156484"/>
    </reaction>
</comment>
<comment type="catalytic activity">
    <reaction evidence="1">
        <text>a 5'-end (5'-triphosphoguanosine)-(2'-O-methyladenylyl)-adenylyl-cytidylyl-adenosine in mRNA + S-adenosyl-L-methionine = a 5'-end (N(7)-methyl 5'-triphosphoguanosine)-(2'-O-methyladenylyl)-adenylyl-cytidylyl-adenosine in mRNA + S-adenosyl-L-homocysteine</text>
        <dbReference type="Rhea" id="RHEA:65440"/>
        <dbReference type="Rhea" id="RHEA-COMP:16798"/>
        <dbReference type="Rhea" id="RHEA-COMP:16801"/>
        <dbReference type="ChEBI" id="CHEBI:57856"/>
        <dbReference type="ChEBI" id="CHEBI:59789"/>
        <dbReference type="ChEBI" id="CHEBI:156482"/>
        <dbReference type="ChEBI" id="CHEBI:156483"/>
    </reaction>
</comment>
<comment type="cofactor">
    <cofactor evidence="2">
        <name>Mg(2+)</name>
        <dbReference type="ChEBI" id="CHEBI:18420"/>
    </cofactor>
    <text evidence="2">For RNA-directed RNA polymerase activity. Mn(2+) can stimulate de novo initiation but it is inefficient at supporting elongation of de novo initiated RNA.</text>
</comment>
<comment type="subunit">
    <text evidence="2">Interacts with the phosphoprotein (via C-terminus); the association of P and L forms the polymerase complex.</text>
</comment>
<comment type="subcellular location">
    <subcellularLocation>
        <location evidence="2">Virion</location>
    </subcellularLocation>
    <subcellularLocation>
        <location evidence="2">Host cytoplasm</location>
    </subcellularLocation>
    <text evidence="2">Localizes in cytoplasmic inclusion bodies.</text>
</comment>
<comment type="domain">
    <text evidence="2">Contains an RNA-dependent RNA polymerase (RdRp) domain, a polyribonucleotidyl transferase (PRNTase or capping) domain and a methyltransferase (MTase) domain.</text>
</comment>
<comment type="similarity">
    <text evidence="6">Belongs to the paramyxovirus L protein family.</text>
</comment>
<organismHost>
    <name type="scientific">Homo sapiens</name>
    <name type="common">Human</name>
    <dbReference type="NCBI Taxonomy" id="9606"/>
</organismHost>
<dbReference type="EC" id="2.7.7.48" evidence="2"/>
<dbReference type="EC" id="3.6.1.-" evidence="2"/>
<dbReference type="EC" id="2.7.7.88" evidence="2"/>
<dbReference type="EC" id="2.1.1.375" evidence="1"/>
<dbReference type="EMBL" id="AF013254">
    <property type="protein sequence ID" value="AAB82439.1"/>
    <property type="molecule type" value="Genomic_RNA"/>
</dbReference>
<dbReference type="EMBL" id="AF013255">
    <property type="protein sequence ID" value="AAB82445.1"/>
    <property type="molecule type" value="Genomic_RNA"/>
</dbReference>
<dbReference type="RefSeq" id="NP_056866.1">
    <property type="nucleotide sequence ID" value="NC_001781.1"/>
</dbReference>
<dbReference type="SMR" id="O36635"/>
<dbReference type="IntAct" id="O36635">
    <property type="interactions" value="3"/>
</dbReference>
<dbReference type="GeneID" id="1489827"/>
<dbReference type="KEGG" id="vg:1489827"/>
<dbReference type="Proteomes" id="UP000002472">
    <property type="component" value="Segment"/>
</dbReference>
<dbReference type="Proteomes" id="UP000180717">
    <property type="component" value="Genome"/>
</dbReference>
<dbReference type="GO" id="GO:0030430">
    <property type="term" value="C:host cell cytoplasm"/>
    <property type="evidence" value="ECO:0007669"/>
    <property type="project" value="UniProtKB-SubCell"/>
</dbReference>
<dbReference type="GO" id="GO:0044423">
    <property type="term" value="C:virion component"/>
    <property type="evidence" value="ECO:0007669"/>
    <property type="project" value="UniProtKB-KW"/>
</dbReference>
<dbReference type="GO" id="GO:0005524">
    <property type="term" value="F:ATP binding"/>
    <property type="evidence" value="ECO:0007669"/>
    <property type="project" value="UniProtKB-KW"/>
</dbReference>
<dbReference type="GO" id="GO:0003924">
    <property type="term" value="F:GTPase activity"/>
    <property type="evidence" value="ECO:0007669"/>
    <property type="project" value="RHEA"/>
</dbReference>
<dbReference type="GO" id="GO:0046872">
    <property type="term" value="F:metal ion binding"/>
    <property type="evidence" value="ECO:0007669"/>
    <property type="project" value="UniProtKB-KW"/>
</dbReference>
<dbReference type="GO" id="GO:0004482">
    <property type="term" value="F:mRNA 5'-cap (guanine-N7-)-methyltransferase activity"/>
    <property type="evidence" value="ECO:0007669"/>
    <property type="project" value="InterPro"/>
</dbReference>
<dbReference type="GO" id="GO:0003968">
    <property type="term" value="F:RNA-directed RNA polymerase activity"/>
    <property type="evidence" value="ECO:0007669"/>
    <property type="project" value="UniProtKB-KW"/>
</dbReference>
<dbReference type="InterPro" id="IPR003006">
    <property type="entry name" value="Ig/MHC_CS"/>
</dbReference>
<dbReference type="InterPro" id="IPR039530">
    <property type="entry name" value="L_methyltransferase_rhabdo"/>
</dbReference>
<dbReference type="InterPro" id="IPR039736">
    <property type="entry name" value="L_poly_C"/>
</dbReference>
<dbReference type="InterPro" id="IPR026890">
    <property type="entry name" value="Mononeg_mRNAcap"/>
</dbReference>
<dbReference type="InterPro" id="IPR014023">
    <property type="entry name" value="Mononeg_RNA_pol_cat"/>
</dbReference>
<dbReference type="InterPro" id="IPR025786">
    <property type="entry name" value="Mononega_L_MeTrfase"/>
</dbReference>
<dbReference type="NCBIfam" id="TIGR04198">
    <property type="entry name" value="paramyx_RNAcap"/>
    <property type="match status" value="1"/>
</dbReference>
<dbReference type="Pfam" id="PF14314">
    <property type="entry name" value="Methyltrans_Mon_2nd"/>
    <property type="match status" value="1"/>
</dbReference>
<dbReference type="Pfam" id="PF14318">
    <property type="entry name" value="Mononeg_mRNAcap"/>
    <property type="match status" value="1"/>
</dbReference>
<dbReference type="Pfam" id="PF00946">
    <property type="entry name" value="Mononeg_RNA_pol"/>
    <property type="match status" value="1"/>
</dbReference>
<dbReference type="PROSITE" id="PS00290">
    <property type="entry name" value="IG_MHC"/>
    <property type="match status" value="1"/>
</dbReference>
<dbReference type="PROSITE" id="PS50526">
    <property type="entry name" value="RDRP_SSRNA_NEG_NONSEG"/>
    <property type="match status" value="1"/>
</dbReference>
<dbReference type="PROSITE" id="PS51590">
    <property type="entry name" value="SAM_MT_MNV_L"/>
    <property type="match status" value="1"/>
</dbReference>
<name>L_HRSVB</name>
<evidence type="ECO:0000250" key="1">
    <source>
        <dbReference type="UniProtKB" id="P03523"/>
    </source>
</evidence>
<evidence type="ECO:0000250" key="2">
    <source>
        <dbReference type="UniProtKB" id="P28887"/>
    </source>
</evidence>
<evidence type="ECO:0000250" key="3">
    <source>
        <dbReference type="UniProtKB" id="Q6WB93"/>
    </source>
</evidence>
<evidence type="ECO:0000255" key="4">
    <source>
        <dbReference type="PROSITE-ProRule" id="PRU00539"/>
    </source>
</evidence>
<evidence type="ECO:0000255" key="5">
    <source>
        <dbReference type="PROSITE-ProRule" id="PRU00923"/>
    </source>
</evidence>
<evidence type="ECO:0000305" key="6"/>
<sequence length="2166" mass="249767">MDPIINGNSANVYLTDSYLKGVISFSECNALGSYLFNGPYLKNDYTNLISRQSPLLEHMNLKKLTITQSLISRYHKGELKLEEPTYFQSLLMTYKSMSSSEQIATTNLLKKIIRRAIEISDVKVYAILNKLGLKEKDRVKPNNNSGDENSVLTTIIKDDILSAVESNQSYTNSDKNHSVNQNITIKTTLLKKLMCSMQHPPSWLIHWFNLYTKLNNILTQYRSNEVKSHGFILIDNQTLSGFQFILNQYGCIVYHKGLKKITTTTYNQFLTWKDISLSRLNVCLITWISNCLNTLNKSLGLRCGFNNVVLSQLFLYGDCILKLFHNEGFYIIKEVEGFIMSLILNITEEDQFRKRFYNSMLNNITDAAIKAQKNLLSRVCHTLLDKTVSDNIINGKWIILLSKFLKLIKLAGDNNLNNLSELYFLFRIFGHPMVDERQAMDAVRINCNETKFYLLSSLSTLRGAFIYRIIKGFVNTYNRWPTLRNAIVLPLRWLNYYKLNTYPSLLEITENDLIILSGLRFYREFHLPKKVDLEMIINDKAISPPKDLIWTSFPRNYMPSHIQNYIEHEKLKFSESDRSRRVLEYYLRDNKFNECDLYNCVVNQSYLNNSNHVVSLTGKERELSVGRMFAMQPGMFRQIQILAEKMIAENILQFFPESLTRYGDLELQKILELKAGISNKSNRYNDNYNNYISKCSIITDLSKFNQAFRYETSCICSDVLDELHGVQSLFSWLHLTIPLVTIICTYRHAPPFIKDHVVNLNEVDEQSGLYRYHMGGIEGWCQKLWTIEAISLLDLISLKGKFSITALINGDNQSIDISKPVRLIEGQTHAQADYLLALNSLKLLYKEYAGIGHKLKGTETYISRDMQFMSKTIQHNGVYYPASIKKVLRVGPWINTILDDFKVSLESIGSLTQELEYRGESLLCSLIFRNIWLYNQIALQLRNHALCNNKLYLDILKVLKHLKTFFNLDSIDMALSLYMNLPMLFGGGDPNLLYRSFYRRTPDFLTEAIVHSVFVLSYYTGHDLQDKLQDLPDDRLNKFLTCVITFDKNPNAEFVTLMRDPQALGSERQAKITSEINRLAVTEVLSIAPNKIFSKSAQHYTTTEIDLNDIMQNIEPTYPHGLRVVYESLPFYKAEKIVNLISGTKSITNILEKTSAIDTTDINRATDMMRKNITLLIRILPLDCNKDKRELLSLENLSITELSKYVRERSWSLSNIVGVTSPSIMFTMDIKYTTSTIASGIIIEKYNVNSLTRGERGPTKPWVGSSTQEKKTMPVYNRQVLTKKQRDQIDLLAKLDWVYASIDNKDEFMEELSTGTLGLSYEKAKKLFPQYLSVNYLHRLTVSSRPCEFPASIPAYRTTNYHFDTSPINHVLTEKYGDEDIDIVFQNCISFGLSLMSVVEQFTNICPNRIILIPKLNEIHLMKPPIFTGDVDIIKLKQVIQKQHMFLPDKISLTQYVELFLSNKALKSGSNINSNLILVHKMSDYFHNAYILSTNLAGHWILIIQLMKDSKGIFEKDWGEGYITDHMFINLNVFFNAYKTYLLCFHKGYGKAKLECDMNTSDLLCVLELIDSSYWKSMSKVFLEQKVIKYIVNQDTSLHRIKGCHSFKLWFLKRLNNAKFTVCPWVVNIDYHPTHMKAILSYIDLVRMGLINVDKLTIKNKNKFNDEFYTSNLFYISYNFSDNTHLLTKQIRIANSELEDNYNKLYHPTPETLENISLIPVKSNNSNKPKFCISGNTESIMMSTFSNKMHIKSSTVTTRFNYSKQDLYNLFPNVVIDRIIDHSGNTAKSNQLYITTSHQTSLVRNSASLYCMLPWHHVNRFNFVFSSTGCKISIEYILKDLKIKDPSCIAFIGEGAGNLLLRTVVELHPDIRYIYRSLKDCNDHSLPIEFLRLYNGHINIDYGENLTIPATDATNNIHWSYLHIKFAEPISIFVCDAELPVTANWSKIIIEWSKHVRKCKYCSSVNRCILIAKYHAQDDIDFKLDNITILKTYVCLGSKLKGSEVYLVLTIGPANILPVFDVVQNAKLIFSRTKNFIMPKKTDKESIDANIKSLIPFLCYPITKKGIKTSLSKLKSVVNGDILSYSIAGRNEVFSNKLINHKHMNILKWLDHVLNFRSAELNYNHLYMIESTYPYLSELLNSLTTNELKKLIKITGSVLYNLPNEQ</sequence>
<keyword id="KW-0067">ATP-binding</keyword>
<keyword id="KW-1035">Host cytoplasm</keyword>
<keyword id="KW-0378">Hydrolase</keyword>
<keyword id="KW-0460">Magnesium</keyword>
<keyword id="KW-0479">Metal-binding</keyword>
<keyword id="KW-0489">Methyltransferase</keyword>
<keyword id="KW-0506">mRNA capping</keyword>
<keyword id="KW-0507">mRNA processing</keyword>
<keyword id="KW-0511">Multifunctional enzyme</keyword>
<keyword id="KW-0547">Nucleotide-binding</keyword>
<keyword id="KW-0548">Nucleotidyltransferase</keyword>
<keyword id="KW-1185">Reference proteome</keyword>
<keyword id="KW-0696">RNA-directed RNA polymerase</keyword>
<keyword id="KW-0949">S-adenosyl-L-methionine</keyword>
<keyword id="KW-0808">Transferase</keyword>
<keyword id="KW-0693">Viral RNA replication</keyword>
<keyword id="KW-0946">Virion</keyword>
<proteinExistence type="inferred from homology"/>
<accession>O36635</accession>
<accession>O36637</accession>
<reference key="1">
    <citation type="journal article" date="1997" name="Proc. Natl. Acad. Sci. U.S.A.">
        <title>Respiratory syncytial virus (RSV) SH and G proteins are not essential for viral replication in vitro: clinical evaluation and molecular characterization of a cold-passaged, attenuated RSV subgroup B mutant.</title>
        <authorList>
            <person name="Karron R.A."/>
            <person name="Buonagurio D.A."/>
            <person name="Georgiu A.F."/>
            <person name="Whitehead S.S."/>
            <person name="Adamus J.E."/>
            <person name="Clements-Mann M.L."/>
            <person name="Harris D.O."/>
            <person name="Randolph V.B."/>
            <person name="Udem S.A."/>
            <person name="Murphy B.R."/>
            <person name="Sidhu M.S."/>
        </authorList>
    </citation>
    <scope>NUCLEOTIDE SEQUENCE [GENOMIC RNA]</scope>
</reference>
<feature type="chain" id="PRO_0000365786" description="RNA-directed RNA polymerase L">
    <location>
        <begin position="1"/>
        <end position="2166"/>
    </location>
</feature>
<feature type="domain" description="RdRp catalytic" evidence="4">
    <location>
        <begin position="693"/>
        <end position="877"/>
    </location>
</feature>
<feature type="domain" description="Mononegavirus-type SAM-dependent 2'-O-MTase" evidence="5">
    <location>
        <begin position="1820"/>
        <end position="2008"/>
    </location>
</feature>
<feature type="region of interest" description="GDP polyribonucleotidyltransferase" evidence="2">
    <location>
        <begin position="968"/>
        <end position="1460"/>
    </location>
</feature>
<feature type="active site" description="Nucleophile; for GDP polyribonucleotidyltransferase activity" evidence="1">
    <location>
        <position position="1338"/>
    </location>
</feature>
<feature type="active site" description="For mRNA (nucleoside-2'-O-)-methyltransferase activity" evidence="3">
    <location>
        <position position="1831"/>
    </location>
</feature>
<feature type="active site" description="For mRNA (nucleoside-2'-O-)-methyltransferase activity" evidence="3">
    <location>
        <position position="1936"/>
    </location>
</feature>
<feature type="active site" description="For mRNA (nucleoside-2'-O-)-methyltransferase activity" evidence="3">
    <location>
        <position position="1973"/>
    </location>
</feature>
<feature type="active site" description="For mRNA (nucleoside-2'-O-)-methyltransferase activity" evidence="3">
    <location>
        <position position="2004"/>
    </location>
</feature>
<feature type="binding site" evidence="2">
    <location>
        <position position="700"/>
    </location>
    <ligand>
        <name>Mg(2+)</name>
        <dbReference type="ChEBI" id="CHEBI:18420"/>
        <note>catalytic; for RNA-directed RNA polymerase activity</note>
    </ligand>
</feature>
<feature type="binding site" evidence="2">
    <location>
        <position position="811"/>
    </location>
    <ligand>
        <name>Mg(2+)</name>
        <dbReference type="ChEBI" id="CHEBI:18420"/>
        <note>catalytic; for RNA-directed RNA polymerase activity</note>
    </ligand>
</feature>
<feature type="binding site" evidence="3">
    <location>
        <begin position="1853"/>
        <end position="1857"/>
    </location>
    <ligand>
        <name>substrate</name>
        <note>for mRNA (nucleoside-2'-O-)-methyltransferase activity</note>
    </ligand>
</feature>
<feature type="sequence variant">
    <original>R</original>
    <variation>K</variation>
    <location>
        <position position="822"/>
    </location>
</feature>
<feature type="sequence variant">
    <original>N</original>
    <variation>H</variation>
    <location>
        <position position="1662"/>
    </location>
</feature>
<feature type="sequence variant">
    <original>L</original>
    <variation>I</variation>
    <location>
        <position position="1886"/>
    </location>
</feature>
<feature type="sequence variant">
    <original>F</original>
    <variation>L</variation>
    <location>
        <position position="2030"/>
    </location>
</feature>